<sequence>MTARTLSLMASLVAYDDSDSEAETEHAGSFNATGQQKDTSGVARPPGQDFASGTLDVPKAGAQPTKHGSCEDPGGYRLPLAQLGRSDWGSCPSQRLQWPGKEPQVTFPIKEPSCSSLWTSHVPASHMPLAAARFKQVKLSRNFPKSSFHAQSESETVGKNGSSFQKKKCEDCVVPYTPRRLRQRQALSTETGKGKDVEPQGPPAGRAPAPLYVGPGVSEFIQPYLNSHYKETTVPRKVLFHLRGHRGPVNTIQWCPVLSKSHMLLSTSMDKTFKVWNAVDSGHCLQTYSLHTEAVRAARWAPCGRRILSGGFDFALHLTDLETGTQLFSGRSDFRITTLKFHPKDHNIFLCGGFSSEMKAWDIRTGKVMRSYKATIQQTLDILFLREGSEFLSSTDASTRDSADRTIIAWDFRTSAKISNQIFHERFTCPSLALHPREPVFLAQTNGNYLALFSTVWPYRMSRRRRYEGHKVEGYSVGCECSPGGDLLVTGSADGRVLMYSFRTASRACTLQGHTQACVGTTYHPVLPSVLATCSWGGDMKIWH</sequence>
<gene>
    <name evidence="6" type="primary">WDR25</name>
    <name evidence="6" type="synonym">C14orf67</name>
</gene>
<name>WDR25_HUMAN</name>
<protein>
    <recommendedName>
        <fullName>WD repeat-containing protein 25</fullName>
    </recommendedName>
</protein>
<keyword id="KW-0025">Alternative splicing</keyword>
<keyword id="KW-1267">Proteomics identification</keyword>
<keyword id="KW-1185">Reference proteome</keyword>
<keyword id="KW-0677">Repeat</keyword>
<keyword id="KW-0853">WD repeat</keyword>
<evidence type="ECO:0000256" key="1">
    <source>
        <dbReference type="SAM" id="MobiDB-lite"/>
    </source>
</evidence>
<evidence type="ECO:0000269" key="2">
    <source>
    </source>
</evidence>
<evidence type="ECO:0000269" key="3">
    <source>
    </source>
</evidence>
<evidence type="ECO:0000303" key="4">
    <source>
    </source>
</evidence>
<evidence type="ECO:0000305" key="5"/>
<evidence type="ECO:0000312" key="6">
    <source>
        <dbReference type="HGNC" id="HGNC:21064"/>
    </source>
</evidence>
<dbReference type="EMBL" id="AY295082">
    <property type="protein sequence ID" value="AAQ63174.1"/>
    <property type="molecule type" value="mRNA"/>
</dbReference>
<dbReference type="EMBL" id="AK291960">
    <property type="protein sequence ID" value="BAF84649.1"/>
    <property type="molecule type" value="mRNA"/>
</dbReference>
<dbReference type="EMBL" id="AL135838">
    <property type="status" value="NOT_ANNOTATED_CDS"/>
    <property type="molecule type" value="Genomic_DNA"/>
</dbReference>
<dbReference type="EMBL" id="AL845552">
    <property type="status" value="NOT_ANNOTATED_CDS"/>
    <property type="molecule type" value="Genomic_DNA"/>
</dbReference>
<dbReference type="EMBL" id="BC003641">
    <property type="protein sequence ID" value="AAH03641.1"/>
    <property type="molecule type" value="mRNA"/>
</dbReference>
<dbReference type="EMBL" id="BX248767">
    <property type="protein sequence ID" value="CAD66574.1"/>
    <property type="molecule type" value="mRNA"/>
</dbReference>
<dbReference type="CCDS" id="CCDS32157.1">
    <molecule id="Q64LD2-1"/>
</dbReference>
<dbReference type="RefSeq" id="NP_001154948.1">
    <molecule id="Q64LD2-1"/>
    <property type="nucleotide sequence ID" value="NM_001161476.3"/>
</dbReference>
<dbReference type="RefSeq" id="NP_001337876.1">
    <molecule id="Q64LD2-1"/>
    <property type="nucleotide sequence ID" value="NM_001350947.2"/>
</dbReference>
<dbReference type="RefSeq" id="NP_001337877.1">
    <molecule id="Q64LD2-1"/>
    <property type="nucleotide sequence ID" value="NM_001350948.2"/>
</dbReference>
<dbReference type="RefSeq" id="NP_078791.3">
    <molecule id="Q64LD2-1"/>
    <property type="nucleotide sequence ID" value="NM_024515.4"/>
</dbReference>
<dbReference type="RefSeq" id="XP_005268113.1">
    <property type="nucleotide sequence ID" value="XM_005268056.4"/>
</dbReference>
<dbReference type="RefSeq" id="XP_011535452.1">
    <property type="nucleotide sequence ID" value="XM_011537150.2"/>
</dbReference>
<dbReference type="SMR" id="Q64LD2"/>
<dbReference type="BioGRID" id="122671">
    <property type="interactions" value="65"/>
</dbReference>
<dbReference type="FunCoup" id="Q64LD2">
    <property type="interactions" value="726"/>
</dbReference>
<dbReference type="IntAct" id="Q64LD2">
    <property type="interactions" value="50"/>
</dbReference>
<dbReference type="STRING" id="9606.ENSP00000334148"/>
<dbReference type="GlyGen" id="Q64LD2">
    <property type="glycosylation" value="3 sites, 1 O-linked glycan (3 sites)"/>
</dbReference>
<dbReference type="iPTMnet" id="Q64LD2"/>
<dbReference type="PhosphoSitePlus" id="Q64LD2"/>
<dbReference type="BioMuta" id="WDR25"/>
<dbReference type="DMDM" id="126302614"/>
<dbReference type="jPOST" id="Q64LD2"/>
<dbReference type="MassIVE" id="Q64LD2"/>
<dbReference type="PaxDb" id="9606-ENSP00000334148"/>
<dbReference type="PeptideAtlas" id="Q64LD2"/>
<dbReference type="ProteomicsDB" id="65918">
    <molecule id="Q64LD2-1"/>
</dbReference>
<dbReference type="ProteomicsDB" id="65919">
    <molecule id="Q64LD2-2"/>
</dbReference>
<dbReference type="Pumba" id="Q64LD2"/>
<dbReference type="Antibodypedia" id="174">
    <property type="antibodies" value="63 antibodies from 15 providers"/>
</dbReference>
<dbReference type="DNASU" id="79446"/>
<dbReference type="Ensembl" id="ENST00000335290.10">
    <molecule id="Q64LD2-1"/>
    <property type="protein sequence ID" value="ENSP00000334148.6"/>
    <property type="gene ID" value="ENSG00000176473.14"/>
</dbReference>
<dbReference type="Ensembl" id="ENST00000402312.8">
    <molecule id="Q64LD2-1"/>
    <property type="protein sequence ID" value="ENSP00000385540.3"/>
    <property type="gene ID" value="ENSG00000176473.14"/>
</dbReference>
<dbReference type="Ensembl" id="ENST00000542471.2">
    <molecule id="Q64LD2-2"/>
    <property type="protein sequence ID" value="ENSP00000441903.2"/>
    <property type="gene ID" value="ENSG00000176473.14"/>
</dbReference>
<dbReference type="Ensembl" id="ENST00000554998.5">
    <molecule id="Q64LD2-1"/>
    <property type="protein sequence ID" value="ENSP00000450661.1"/>
    <property type="gene ID" value="ENSG00000176473.14"/>
</dbReference>
<dbReference type="GeneID" id="79446"/>
<dbReference type="KEGG" id="hsa:79446"/>
<dbReference type="MANE-Select" id="ENST00000402312.8">
    <property type="protein sequence ID" value="ENSP00000385540.3"/>
    <property type="RefSeq nucleotide sequence ID" value="NM_001161476.3"/>
    <property type="RefSeq protein sequence ID" value="NP_001154948.1"/>
</dbReference>
<dbReference type="UCSC" id="uc001yhn.4">
    <molecule id="Q64LD2-1"/>
    <property type="organism name" value="human"/>
</dbReference>
<dbReference type="AGR" id="HGNC:21064"/>
<dbReference type="CTD" id="79446"/>
<dbReference type="DisGeNET" id="79446"/>
<dbReference type="GeneCards" id="WDR25"/>
<dbReference type="HGNC" id="HGNC:21064">
    <property type="gene designation" value="WDR25"/>
</dbReference>
<dbReference type="HPA" id="ENSG00000176473">
    <property type="expression patterns" value="Low tissue specificity"/>
</dbReference>
<dbReference type="MalaCards" id="WDR25"/>
<dbReference type="MIM" id="618059">
    <property type="type" value="gene"/>
</dbReference>
<dbReference type="neXtProt" id="NX_Q64LD2"/>
<dbReference type="OpenTargets" id="ENSG00000176473"/>
<dbReference type="PharmGKB" id="PA142670607"/>
<dbReference type="VEuPathDB" id="HostDB:ENSG00000176473"/>
<dbReference type="eggNOG" id="KOG0282">
    <property type="taxonomic scope" value="Eukaryota"/>
</dbReference>
<dbReference type="GeneTree" id="ENSGT00530000063583"/>
<dbReference type="HOGENOM" id="CLU_042878_0_0_1"/>
<dbReference type="InParanoid" id="Q64LD2"/>
<dbReference type="OMA" id="FVCGGFH"/>
<dbReference type="OrthoDB" id="256303at2759"/>
<dbReference type="PAN-GO" id="Q64LD2">
    <property type="GO annotations" value="0 GO annotations based on evolutionary models"/>
</dbReference>
<dbReference type="PhylomeDB" id="Q64LD2"/>
<dbReference type="TreeFam" id="TF329325"/>
<dbReference type="PathwayCommons" id="Q64LD2"/>
<dbReference type="SignaLink" id="Q64LD2"/>
<dbReference type="BioGRID-ORCS" id="79446">
    <property type="hits" value="626 hits in 1155 CRISPR screens"/>
</dbReference>
<dbReference type="ChiTaRS" id="WDR25">
    <property type="organism name" value="human"/>
</dbReference>
<dbReference type="GenomeRNAi" id="79446"/>
<dbReference type="Pharos" id="Q64LD2">
    <property type="development level" value="Tdark"/>
</dbReference>
<dbReference type="PRO" id="PR:Q64LD2"/>
<dbReference type="Proteomes" id="UP000005640">
    <property type="component" value="Chromosome 14"/>
</dbReference>
<dbReference type="RNAct" id="Q64LD2">
    <property type="molecule type" value="protein"/>
</dbReference>
<dbReference type="Bgee" id="ENSG00000176473">
    <property type="expression patterns" value="Expressed in male germ line stem cell (sensu Vertebrata) in testis and 107 other cell types or tissues"/>
</dbReference>
<dbReference type="ExpressionAtlas" id="Q64LD2">
    <property type="expression patterns" value="baseline and differential"/>
</dbReference>
<dbReference type="Gene3D" id="2.130.10.10">
    <property type="entry name" value="YVTN repeat-like/Quinoprotein amine dehydrogenase"/>
    <property type="match status" value="1"/>
</dbReference>
<dbReference type="InterPro" id="IPR015943">
    <property type="entry name" value="WD40/YVTN_repeat-like_dom_sf"/>
</dbReference>
<dbReference type="InterPro" id="IPR036322">
    <property type="entry name" value="WD40_repeat_dom_sf"/>
</dbReference>
<dbReference type="InterPro" id="IPR001680">
    <property type="entry name" value="WD40_rpt"/>
</dbReference>
<dbReference type="InterPro" id="IPR053053">
    <property type="entry name" value="WD_repeat_protein"/>
</dbReference>
<dbReference type="PANTHER" id="PTHR44566">
    <property type="entry name" value="TRANSDUCIN/WD40 REPEAT-LIKE SUPERFAMILY PROTEIN"/>
    <property type="match status" value="1"/>
</dbReference>
<dbReference type="PANTHER" id="PTHR44566:SF1">
    <property type="entry name" value="WD REPEAT-CONTAINING PROTEIN 25"/>
    <property type="match status" value="1"/>
</dbReference>
<dbReference type="Pfam" id="PF00400">
    <property type="entry name" value="WD40"/>
    <property type="match status" value="3"/>
</dbReference>
<dbReference type="SMART" id="SM00320">
    <property type="entry name" value="WD40"/>
    <property type="match status" value="6"/>
</dbReference>
<dbReference type="SUPFAM" id="SSF50978">
    <property type="entry name" value="WD40 repeat-like"/>
    <property type="match status" value="1"/>
</dbReference>
<dbReference type="PROSITE" id="PS50082">
    <property type="entry name" value="WD_REPEATS_2"/>
    <property type="match status" value="2"/>
</dbReference>
<dbReference type="PROSITE" id="PS50294">
    <property type="entry name" value="WD_REPEATS_REGION"/>
    <property type="match status" value="1"/>
</dbReference>
<accession>Q64LD2</accession>
<accession>A8K7E5</accession>
<accession>Q6NVV6</accession>
<accession>Q86TQ4</accession>
<accession>Q9BTK5</accession>
<feature type="chain" id="PRO_0000256227" description="WD repeat-containing protein 25">
    <location>
        <begin position="1"/>
        <end position="544"/>
    </location>
</feature>
<feature type="repeat" description="WD 1">
    <location>
        <begin position="244"/>
        <end position="286"/>
    </location>
</feature>
<feature type="repeat" description="WD 2">
    <location>
        <begin position="290"/>
        <end position="329"/>
    </location>
</feature>
<feature type="repeat" description="WD 3">
    <location>
        <begin position="330"/>
        <end position="373"/>
    </location>
</feature>
<feature type="repeat" description="WD 4">
    <location>
        <begin position="375"/>
        <end position="420"/>
    </location>
</feature>
<feature type="repeat" description="WD 5">
    <location>
        <begin position="424"/>
        <end position="463"/>
    </location>
</feature>
<feature type="repeat" description="WD 6">
    <location>
        <begin position="469"/>
        <end position="510"/>
    </location>
</feature>
<feature type="repeat" description="WD 7">
    <location>
        <begin position="513"/>
        <end position="544"/>
    </location>
</feature>
<feature type="region of interest" description="Disordered" evidence="1">
    <location>
        <begin position="17"/>
        <end position="74"/>
    </location>
</feature>
<feature type="region of interest" description="Disordered" evidence="1">
    <location>
        <begin position="183"/>
        <end position="208"/>
    </location>
</feature>
<feature type="compositionally biased region" description="Polar residues" evidence="1">
    <location>
        <begin position="30"/>
        <end position="39"/>
    </location>
</feature>
<feature type="splice variant" id="VSP_021331" description="In isoform 2." evidence="4">
    <location>
        <begin position="1"/>
        <end position="257"/>
    </location>
</feature>
<feature type="splice variant" id="VSP_021332" description="In isoform 2." evidence="4">
    <original>LSKSHMLLSTSMDKTFK</original>
    <variation>MPALCLVLCWFQGLLGE</variation>
    <location>
        <begin position="258"/>
        <end position="274"/>
    </location>
</feature>
<feature type="sequence variant" id="VAR_060042" description="In dbSNP:rs2273801.">
    <original>K</original>
    <variation>R</variation>
    <location>
        <position position="59"/>
    </location>
</feature>
<feature type="sequence variant" id="VAR_028888" description="In dbSNP:rs2181170." evidence="2 3">
    <original>W</original>
    <variation>R</variation>
    <location>
        <position position="88"/>
    </location>
</feature>
<feature type="sequence variant" id="VAR_060043" description="In dbSNP:rs34331240.">
    <original>T</original>
    <variation>M</variation>
    <location>
        <position position="119"/>
    </location>
</feature>
<feature type="sequence variant" id="VAR_028889" description="In dbSNP:rs2273800." evidence="2">
    <original>H</original>
    <variation>R</variation>
    <location>
        <position position="149"/>
    </location>
</feature>
<feature type="sequence conflict" description="In Ref. 2; BAF84649." evidence="5" ref="2">
    <original>F</original>
    <variation>L</variation>
    <location>
        <position position="30"/>
    </location>
</feature>
<feature type="sequence conflict" description="In Ref. 2; BAF84649." evidence="5" ref="2">
    <original>Q</original>
    <variation>R</variation>
    <location>
        <position position="165"/>
    </location>
</feature>
<feature type="sequence conflict" description="In Ref. 1; AAQ63174." evidence="5" ref="1">
    <original>S</original>
    <variation>I</variation>
    <location>
        <position position="462"/>
    </location>
</feature>
<reference key="1">
    <citation type="journal article" date="2004" name="Biochem. Genet.">
        <title>A novel human gene (WDR25) encoding a 7-WD40-containing protein maps on 14q32.</title>
        <authorList>
            <person name="Jin F."/>
            <person name="Dai J."/>
            <person name="Ji C."/>
            <person name="Gu S."/>
            <person name="Wu M."/>
            <person name="Qian J."/>
            <person name="Xie Y."/>
            <person name="Mao Y."/>
        </authorList>
    </citation>
    <scope>NUCLEOTIDE SEQUENCE [MRNA] (ISOFORM 1)</scope>
    <scope>TISSUE SPECIFICITY</scope>
    <scope>VARIANT ARG-88</scope>
    <source>
        <tissue>Fetal brain</tissue>
    </source>
</reference>
<reference key="2">
    <citation type="journal article" date="2004" name="Nat. Genet.">
        <title>Complete sequencing and characterization of 21,243 full-length human cDNAs.</title>
        <authorList>
            <person name="Ota T."/>
            <person name="Suzuki Y."/>
            <person name="Nishikawa T."/>
            <person name="Otsuki T."/>
            <person name="Sugiyama T."/>
            <person name="Irie R."/>
            <person name="Wakamatsu A."/>
            <person name="Hayashi K."/>
            <person name="Sato H."/>
            <person name="Nagai K."/>
            <person name="Kimura K."/>
            <person name="Makita H."/>
            <person name="Sekine M."/>
            <person name="Obayashi M."/>
            <person name="Nishi T."/>
            <person name="Shibahara T."/>
            <person name="Tanaka T."/>
            <person name="Ishii S."/>
            <person name="Yamamoto J."/>
            <person name="Saito K."/>
            <person name="Kawai Y."/>
            <person name="Isono Y."/>
            <person name="Nakamura Y."/>
            <person name="Nagahari K."/>
            <person name="Murakami K."/>
            <person name="Yasuda T."/>
            <person name="Iwayanagi T."/>
            <person name="Wagatsuma M."/>
            <person name="Shiratori A."/>
            <person name="Sudo H."/>
            <person name="Hosoiri T."/>
            <person name="Kaku Y."/>
            <person name="Kodaira H."/>
            <person name="Kondo H."/>
            <person name="Sugawara M."/>
            <person name="Takahashi M."/>
            <person name="Kanda K."/>
            <person name="Yokoi T."/>
            <person name="Furuya T."/>
            <person name="Kikkawa E."/>
            <person name="Omura Y."/>
            <person name="Abe K."/>
            <person name="Kamihara K."/>
            <person name="Katsuta N."/>
            <person name="Sato K."/>
            <person name="Tanikawa M."/>
            <person name="Yamazaki M."/>
            <person name="Ninomiya K."/>
            <person name="Ishibashi T."/>
            <person name="Yamashita H."/>
            <person name="Murakawa K."/>
            <person name="Fujimori K."/>
            <person name="Tanai H."/>
            <person name="Kimata M."/>
            <person name="Watanabe M."/>
            <person name="Hiraoka S."/>
            <person name="Chiba Y."/>
            <person name="Ishida S."/>
            <person name="Ono Y."/>
            <person name="Takiguchi S."/>
            <person name="Watanabe S."/>
            <person name="Yosida M."/>
            <person name="Hotuta T."/>
            <person name="Kusano J."/>
            <person name="Kanehori K."/>
            <person name="Takahashi-Fujii A."/>
            <person name="Hara H."/>
            <person name="Tanase T.-O."/>
            <person name="Nomura Y."/>
            <person name="Togiya S."/>
            <person name="Komai F."/>
            <person name="Hara R."/>
            <person name="Takeuchi K."/>
            <person name="Arita M."/>
            <person name="Imose N."/>
            <person name="Musashino K."/>
            <person name="Yuuki H."/>
            <person name="Oshima A."/>
            <person name="Sasaki N."/>
            <person name="Aotsuka S."/>
            <person name="Yoshikawa Y."/>
            <person name="Matsunawa H."/>
            <person name="Ichihara T."/>
            <person name="Shiohata N."/>
            <person name="Sano S."/>
            <person name="Moriya S."/>
            <person name="Momiyama H."/>
            <person name="Satoh N."/>
            <person name="Takami S."/>
            <person name="Terashima Y."/>
            <person name="Suzuki O."/>
            <person name="Nakagawa S."/>
            <person name="Senoh A."/>
            <person name="Mizoguchi H."/>
            <person name="Goto Y."/>
            <person name="Shimizu F."/>
            <person name="Wakebe H."/>
            <person name="Hishigaki H."/>
            <person name="Watanabe T."/>
            <person name="Sugiyama A."/>
            <person name="Takemoto M."/>
            <person name="Kawakami B."/>
            <person name="Yamazaki M."/>
            <person name="Watanabe K."/>
            <person name="Kumagai A."/>
            <person name="Itakura S."/>
            <person name="Fukuzumi Y."/>
            <person name="Fujimori Y."/>
            <person name="Komiyama M."/>
            <person name="Tashiro H."/>
            <person name="Tanigami A."/>
            <person name="Fujiwara T."/>
            <person name="Ono T."/>
            <person name="Yamada K."/>
            <person name="Fujii Y."/>
            <person name="Ozaki K."/>
            <person name="Hirao M."/>
            <person name="Ohmori Y."/>
            <person name="Kawabata A."/>
            <person name="Hikiji T."/>
            <person name="Kobatake N."/>
            <person name="Inagaki H."/>
            <person name="Ikema Y."/>
            <person name="Okamoto S."/>
            <person name="Okitani R."/>
            <person name="Kawakami T."/>
            <person name="Noguchi S."/>
            <person name="Itoh T."/>
            <person name="Shigeta K."/>
            <person name="Senba T."/>
            <person name="Matsumura K."/>
            <person name="Nakajima Y."/>
            <person name="Mizuno T."/>
            <person name="Morinaga M."/>
            <person name="Sasaki M."/>
            <person name="Togashi T."/>
            <person name="Oyama M."/>
            <person name="Hata H."/>
            <person name="Watanabe M."/>
            <person name="Komatsu T."/>
            <person name="Mizushima-Sugano J."/>
            <person name="Satoh T."/>
            <person name="Shirai Y."/>
            <person name="Takahashi Y."/>
            <person name="Nakagawa K."/>
            <person name="Okumura K."/>
            <person name="Nagase T."/>
            <person name="Nomura N."/>
            <person name="Kikuchi H."/>
            <person name="Masuho Y."/>
            <person name="Yamashita R."/>
            <person name="Nakai K."/>
            <person name="Yada T."/>
            <person name="Nakamura Y."/>
            <person name="Ohara O."/>
            <person name="Isogai T."/>
            <person name="Sugano S."/>
        </authorList>
    </citation>
    <scope>NUCLEOTIDE SEQUENCE [LARGE SCALE MRNA] (ISOFORM 1)</scope>
    <scope>VARIANTS ARG-88 AND ARG-149</scope>
    <source>
        <tissue>Neuroblastoma</tissue>
    </source>
</reference>
<reference key="3">
    <citation type="journal article" date="2003" name="Nature">
        <title>The DNA sequence and analysis of human chromosome 14.</title>
        <authorList>
            <person name="Heilig R."/>
            <person name="Eckenberg R."/>
            <person name="Petit J.-L."/>
            <person name="Fonknechten N."/>
            <person name="Da Silva C."/>
            <person name="Cattolico L."/>
            <person name="Levy M."/>
            <person name="Barbe V."/>
            <person name="De Berardinis V."/>
            <person name="Ureta-Vidal A."/>
            <person name="Pelletier E."/>
            <person name="Vico V."/>
            <person name="Anthouard V."/>
            <person name="Rowen L."/>
            <person name="Madan A."/>
            <person name="Qin S."/>
            <person name="Sun H."/>
            <person name="Du H."/>
            <person name="Pepin K."/>
            <person name="Artiguenave F."/>
            <person name="Robert C."/>
            <person name="Cruaud C."/>
            <person name="Bruels T."/>
            <person name="Jaillon O."/>
            <person name="Friedlander L."/>
            <person name="Samson G."/>
            <person name="Brottier P."/>
            <person name="Cure S."/>
            <person name="Segurens B."/>
            <person name="Aniere F."/>
            <person name="Samain S."/>
            <person name="Crespeau H."/>
            <person name="Abbasi N."/>
            <person name="Aiach N."/>
            <person name="Boscus D."/>
            <person name="Dickhoff R."/>
            <person name="Dors M."/>
            <person name="Dubois I."/>
            <person name="Friedman C."/>
            <person name="Gouyvenoux M."/>
            <person name="James R."/>
            <person name="Madan A."/>
            <person name="Mairey-Estrada B."/>
            <person name="Mangenot S."/>
            <person name="Martins N."/>
            <person name="Menard M."/>
            <person name="Oztas S."/>
            <person name="Ratcliffe A."/>
            <person name="Shaffer T."/>
            <person name="Trask B."/>
            <person name="Vacherie B."/>
            <person name="Bellemere C."/>
            <person name="Belser C."/>
            <person name="Besnard-Gonnet M."/>
            <person name="Bartol-Mavel D."/>
            <person name="Boutard M."/>
            <person name="Briez-Silla S."/>
            <person name="Combette S."/>
            <person name="Dufosse-Laurent V."/>
            <person name="Ferron C."/>
            <person name="Lechaplais C."/>
            <person name="Louesse C."/>
            <person name="Muselet D."/>
            <person name="Magdelenat G."/>
            <person name="Pateau E."/>
            <person name="Petit E."/>
            <person name="Sirvain-Trukniewicz P."/>
            <person name="Trybou A."/>
            <person name="Vega-Czarny N."/>
            <person name="Bataille E."/>
            <person name="Bluet E."/>
            <person name="Bordelais I."/>
            <person name="Dubois M."/>
            <person name="Dumont C."/>
            <person name="Guerin T."/>
            <person name="Haffray S."/>
            <person name="Hammadi R."/>
            <person name="Muanga J."/>
            <person name="Pellouin V."/>
            <person name="Robert D."/>
            <person name="Wunderle E."/>
            <person name="Gauguet G."/>
            <person name="Roy A."/>
            <person name="Sainte-Marthe L."/>
            <person name="Verdier J."/>
            <person name="Verdier-Discala C."/>
            <person name="Hillier L.W."/>
            <person name="Fulton L."/>
            <person name="McPherson J."/>
            <person name="Matsuda F."/>
            <person name="Wilson R."/>
            <person name="Scarpelli C."/>
            <person name="Gyapay G."/>
            <person name="Wincker P."/>
            <person name="Saurin W."/>
            <person name="Quetier F."/>
            <person name="Waterston R."/>
            <person name="Hood L."/>
            <person name="Weissenbach J."/>
        </authorList>
    </citation>
    <scope>NUCLEOTIDE SEQUENCE [LARGE SCALE GENOMIC DNA]</scope>
</reference>
<reference key="4">
    <citation type="journal article" date="2004" name="Genome Res.">
        <title>The status, quality, and expansion of the NIH full-length cDNA project: the Mammalian Gene Collection (MGC).</title>
        <authorList>
            <consortium name="The MGC Project Team"/>
        </authorList>
    </citation>
    <scope>NUCLEOTIDE SEQUENCE [LARGE SCALE MRNA] (ISOFORM 2)</scope>
    <source>
        <tissue>Muscle</tissue>
    </source>
</reference>
<reference key="5">
    <citation type="submission" date="2003-02" db="EMBL/GenBank/DDBJ databases">
        <title>Full-length cDNA libraries and normalization.</title>
        <authorList>
            <person name="Li W.B."/>
            <person name="Gruber C."/>
            <person name="Jessee J."/>
            <person name="Polayes D."/>
        </authorList>
    </citation>
    <scope>NUCLEOTIDE SEQUENCE [LARGE SCALE MRNA] OF 1-275 (ISOFORM 1)</scope>
    <source>
        <tissue>Neuroblastoma</tissue>
    </source>
</reference>
<proteinExistence type="evidence at protein level"/>
<comment type="interaction">
    <interactant intactId="EBI-744560">
        <id>Q64LD2</id>
    </interactant>
    <interactant intactId="EBI-357046">
        <id>Q99832</id>
        <label>CCT7</label>
    </interactant>
    <organismsDiffer>false</organismsDiffer>
    <experiments>2</experiments>
</comment>
<comment type="interaction">
    <interactant intactId="EBI-744560">
        <id>Q64LD2</id>
    </interactant>
    <interactant intactId="EBI-948001">
        <id>Q15323</id>
        <label>KRT31</label>
    </interactant>
    <organismsDiffer>false</organismsDiffer>
    <experiments>3</experiments>
</comment>
<comment type="interaction">
    <interactant intactId="EBI-744560">
        <id>Q64LD2</id>
    </interactant>
    <interactant intactId="EBI-10171697">
        <id>Q6A162</id>
        <label>KRT40</label>
    </interactant>
    <organismsDiffer>false</organismsDiffer>
    <experiments>3</experiments>
</comment>
<comment type="interaction">
    <interactant intactId="EBI-744560">
        <id>Q64LD2</id>
    </interactant>
    <interactant intactId="EBI-945833">
        <id>Q7Z3S9</id>
        <label>NOTCH2NLA</label>
    </interactant>
    <organismsDiffer>false</organismsDiffer>
    <experiments>3</experiments>
</comment>
<comment type="interaction">
    <interactant intactId="EBI-744560">
        <id>Q64LD2</id>
    </interactant>
    <interactant intactId="EBI-302345">
        <id>Q8ND90</id>
        <label>PNMA1</label>
    </interactant>
    <organismsDiffer>false</organismsDiffer>
    <experiments>3</experiments>
</comment>
<comment type="interaction">
    <interactant intactId="EBI-744560">
        <id>Q64LD2</id>
    </interactant>
    <interactant intactId="EBI-740098">
        <id>P36406</id>
        <label>TRIM23</label>
    </interactant>
    <organismsDiffer>false</organismsDiffer>
    <experiments>3</experiments>
</comment>
<comment type="interaction">
    <interactant intactId="EBI-12032042">
        <id>Q64LD2-2</id>
    </interactant>
    <interactant intactId="EBI-11976299">
        <id>Q5BKX5-3</id>
        <label>ACTMAP</label>
    </interactant>
    <organismsDiffer>false</organismsDiffer>
    <experiments>3</experiments>
</comment>
<comment type="interaction">
    <interactant intactId="EBI-12032042">
        <id>Q64LD2-2</id>
    </interactant>
    <interactant intactId="EBI-357530">
        <id>Q9ULX6</id>
        <label>AKAP8L</label>
    </interactant>
    <organismsDiffer>false</organismsDiffer>
    <experiments>3</experiments>
</comment>
<comment type="interaction">
    <interactant intactId="EBI-12032042">
        <id>Q64LD2-2</id>
    </interactant>
    <interactant intactId="EBI-12819063">
        <id>Q9BYD5</id>
        <label>CNFN</label>
    </interactant>
    <organismsDiffer>false</organismsDiffer>
    <experiments>3</experiments>
</comment>
<comment type="interaction">
    <interactant intactId="EBI-12032042">
        <id>Q64LD2-2</id>
    </interactant>
    <interactant intactId="EBI-3867333">
        <id>A8MQ03</id>
        <label>CYSRT1</label>
    </interactant>
    <organismsDiffer>false</organismsDiffer>
    <experiments>4</experiments>
</comment>
<comment type="interaction">
    <interactant intactId="EBI-12032042">
        <id>Q64LD2-2</id>
    </interactant>
    <interactant intactId="EBI-739789">
        <id>Q92997</id>
        <label>DVL3</label>
    </interactant>
    <organismsDiffer>false</organismsDiffer>
    <experiments>3</experiments>
</comment>
<comment type="interaction">
    <interactant intactId="EBI-12032042">
        <id>Q64LD2-2</id>
    </interactant>
    <interactant intactId="EBI-12193763">
        <id>A1KXE4-2</id>
        <label>FAM168B</label>
    </interactant>
    <organismsDiffer>false</organismsDiffer>
    <experiments>3</experiments>
</comment>
<comment type="interaction">
    <interactant intactId="EBI-12032042">
        <id>Q64LD2-2</id>
    </interactant>
    <interactant intactId="EBI-741101">
        <id>Q13643</id>
        <label>FHL3</label>
    </interactant>
    <organismsDiffer>false</organismsDiffer>
    <experiments>3</experiments>
</comment>
<comment type="interaction">
    <interactant intactId="EBI-12032042">
        <id>Q64LD2-2</id>
    </interactant>
    <interactant intactId="EBI-12018822">
        <id>Q12951-2</id>
        <label>FOXI1</label>
    </interactant>
    <organismsDiffer>false</organismsDiffer>
    <experiments>3</experiments>
</comment>
<comment type="interaction">
    <interactant intactId="EBI-12032042">
        <id>Q64LD2-2</id>
    </interactant>
    <interactant intactId="EBI-5916454">
        <id>A6NEM1</id>
        <label>GOLGA6L9</label>
    </interactant>
    <organismsDiffer>false</organismsDiffer>
    <experiments>3</experiments>
</comment>
<comment type="interaction">
    <interactant intactId="EBI-12032042">
        <id>Q64LD2-2</id>
    </interactant>
    <interactant intactId="EBI-7116203">
        <id>O75031</id>
        <label>HSF2BP</label>
    </interactant>
    <organismsDiffer>false</organismsDiffer>
    <experiments>3</experiments>
</comment>
<comment type="interaction">
    <interactant intactId="EBI-12032042">
        <id>Q64LD2-2</id>
    </interactant>
    <interactant intactId="EBI-948001">
        <id>Q15323</id>
        <label>KRT31</label>
    </interactant>
    <organismsDiffer>false</organismsDiffer>
    <experiments>3</experiments>
</comment>
<comment type="interaction">
    <interactant intactId="EBI-12032042">
        <id>Q64LD2-2</id>
    </interactant>
    <interactant intactId="EBI-1047093">
        <id>O76011</id>
        <label>KRT34</label>
    </interactant>
    <organismsDiffer>false</organismsDiffer>
    <experiments>3</experiments>
</comment>
<comment type="interaction">
    <interactant intactId="EBI-12032042">
        <id>Q64LD2-2</id>
    </interactant>
    <interactant intactId="EBI-11953334">
        <id>P60328</id>
        <label>KRTAP12-3</label>
    </interactant>
    <organismsDiffer>false</organismsDiffer>
    <experiments>3</experiments>
</comment>
<comment type="interaction">
    <interactant intactId="EBI-12032042">
        <id>Q64LD2-2</id>
    </interactant>
    <interactant intactId="EBI-11992140">
        <id>Q3LI76</id>
        <label>KRTAP15-1</label>
    </interactant>
    <organismsDiffer>false</organismsDiffer>
    <experiments>3</experiments>
</comment>
<comment type="interaction">
    <interactant intactId="EBI-12032042">
        <id>Q64LD2-2</id>
    </interactant>
    <interactant intactId="EBI-9996449">
        <id>Q9BYR8</id>
        <label>KRTAP3-1</label>
    </interactant>
    <organismsDiffer>false</organismsDiffer>
    <experiments>3</experiments>
</comment>
<comment type="interaction">
    <interactant intactId="EBI-12032042">
        <id>Q64LD2-2</id>
    </interactant>
    <interactant intactId="EBI-22311199">
        <id>Q3LI67</id>
        <label>KRTAP6-3</label>
    </interactant>
    <organismsDiffer>false</organismsDiffer>
    <experiments>3</experiments>
</comment>
<comment type="interaction">
    <interactant intactId="EBI-12032042">
        <id>Q64LD2-2</id>
    </interactant>
    <interactant intactId="EBI-740738">
        <id>O95751</id>
        <label>LDOC1</label>
    </interactant>
    <organismsDiffer>false</organismsDiffer>
    <experiments>3</experiments>
</comment>
<comment type="interaction">
    <interactant intactId="EBI-12032042">
        <id>Q64LD2-2</id>
    </interactant>
    <interactant intactId="EBI-739832">
        <id>Q8TBB1</id>
        <label>LNX1</label>
    </interactant>
    <organismsDiffer>false</organismsDiffer>
    <experiments>3</experiments>
</comment>
<comment type="interaction">
    <interactant intactId="EBI-12032042">
        <id>Q64LD2-2</id>
    </interactant>
    <interactant intactId="EBI-2340269">
        <id>Q13064</id>
        <label>MKRN3</label>
    </interactant>
    <organismsDiffer>false</organismsDiffer>
    <experiments>3</experiments>
</comment>
<comment type="interaction">
    <interactant intactId="EBI-12032042">
        <id>Q64LD2-2</id>
    </interactant>
    <interactant intactId="EBI-22310682">
        <id>P0DPK4</id>
        <label>NOTCH2NLC</label>
    </interactant>
    <organismsDiffer>false</organismsDiffer>
    <experiments>3</experiments>
</comment>
<comment type="interaction">
    <interactant intactId="EBI-12032042">
        <id>Q64LD2-2</id>
    </interactant>
    <interactant intactId="EBI-357275">
        <id>Q99471</id>
        <label>PFDN5</label>
    </interactant>
    <organismsDiffer>false</organismsDiffer>
    <experiments>3</experiments>
</comment>
<comment type="interaction">
    <interactant intactId="EBI-12032042">
        <id>Q64LD2-2</id>
    </interactant>
    <interactant intactId="EBI-3957793">
        <id>Q9GZV8</id>
        <label>PRDM14</label>
    </interactant>
    <organismsDiffer>false</organismsDiffer>
    <experiments>3</experiments>
</comment>
<comment type="interaction">
    <interactant intactId="EBI-12032042">
        <id>Q64LD2-2</id>
    </interactant>
    <interactant intactId="EBI-355546">
        <id>P61289</id>
        <label>PSME3</label>
    </interactant>
    <organismsDiffer>false</organismsDiffer>
    <experiments>3</experiments>
</comment>
<comment type="interaction">
    <interactant intactId="EBI-12032042">
        <id>Q64LD2-2</id>
    </interactant>
    <interactant intactId="EBI-11139477">
        <id>Q96N21</id>
        <label>TEPSIN</label>
    </interactant>
    <organismsDiffer>false</organismsDiffer>
    <experiments>3</experiments>
</comment>
<comment type="interaction">
    <interactant intactId="EBI-12032042">
        <id>Q64LD2-2</id>
    </interactant>
    <interactant intactId="EBI-11524408">
        <id>Q5T124-6</id>
        <label>UBXN11</label>
    </interactant>
    <organismsDiffer>false</organismsDiffer>
    <experiments>3</experiments>
</comment>
<comment type="alternative products">
    <event type="alternative splicing"/>
    <isoform>
        <id>Q64LD2-1</id>
        <name>1</name>
        <sequence type="displayed"/>
    </isoform>
    <isoform>
        <id>Q64LD2-2</id>
        <name>2</name>
        <sequence type="described" ref="VSP_021331 VSP_021332"/>
    </isoform>
</comment>
<comment type="tissue specificity">
    <text evidence="3">Expressed in heart, muscle, testis, ovary, uterus and prostate.</text>
</comment>
<organism>
    <name type="scientific">Homo sapiens</name>
    <name type="common">Human</name>
    <dbReference type="NCBI Taxonomy" id="9606"/>
    <lineage>
        <taxon>Eukaryota</taxon>
        <taxon>Metazoa</taxon>
        <taxon>Chordata</taxon>
        <taxon>Craniata</taxon>
        <taxon>Vertebrata</taxon>
        <taxon>Euteleostomi</taxon>
        <taxon>Mammalia</taxon>
        <taxon>Eutheria</taxon>
        <taxon>Euarchontoglires</taxon>
        <taxon>Primates</taxon>
        <taxon>Haplorrhini</taxon>
        <taxon>Catarrhini</taxon>
        <taxon>Hominidae</taxon>
        <taxon>Homo</taxon>
    </lineage>
</organism>